<gene>
    <name type="primary">RNASE10</name>
</gene>
<comment type="function">
    <text evidence="1 4">Secreted proximal epididymal protein required for post-testicular sperm maturation and male fertility. May be involved in sperm adhesion to the egg zona pellucida (By similarity). Does not have ribonuclease activity.</text>
</comment>
<comment type="subcellular location">
    <subcellularLocation>
        <location evidence="3 4">Secreted</location>
    </subcellularLocation>
</comment>
<comment type="tissue specificity">
    <text evidence="3">Male-specific expression in proximal caput of the epididymis.</text>
</comment>
<comment type="PTM">
    <text evidence="3">The N-terminus is blocked. Glycosylated.</text>
</comment>
<comment type="miscellaneous">
    <text>Represents 34% of the proteins secreted by the epididymis and 89% of the proteins secreted by the proximal caput.</text>
</comment>
<comment type="similarity">
    <text evidence="5">Belongs to the pancreatic ribonuclease family.</text>
</comment>
<reference key="1">
    <citation type="journal article" date="2004" name="Biol. Reprod.">
        <title>Identification of a member of a new RNase A family specifically secreted by epididymal caput epithelium.</title>
        <authorList>
            <person name="Castella S."/>
            <person name="Fouchecourt S."/>
            <person name="Teixeira-Gomes A.P."/>
            <person name="Vinh J."/>
            <person name="Belghazi M."/>
            <person name="Dacheux F."/>
            <person name="Dacheux J.-L."/>
        </authorList>
    </citation>
    <scope>NUCLEOTIDE SEQUENCE [MRNA]</scope>
    <scope>PROTEIN SEQUENCE OF 32-45; 64-68; 96-108; 151-159; 168-176; 177-191 AND 197-201</scope>
    <scope>GLYCOSYLATION</scope>
    <scope>TISSUE SPECIFICITY</scope>
    <scope>SUBCELLULAR LOCATION</scope>
    <source>
        <tissue>Epididymis</tissue>
    </source>
</reference>
<reference key="2">
    <citation type="submission" date="2004-04" db="EMBL/GenBank/DDBJ databases">
        <title>Sus Scrofa Train A gene sequencing.</title>
        <authorList>
            <person name="Castella S."/>
            <person name="Uzbekova S."/>
            <person name="Dacheux J.-L."/>
        </authorList>
    </citation>
    <scope>NUCLEOTIDE SEQUENCE [GENOMIC DNA]</scope>
    <source>
        <tissue>Epididymis</tissue>
    </source>
</reference>
<reference key="3">
    <citation type="journal article" date="2004" name="Biol. Reprod.">
        <title>Train A, an RNase A-like protein without RNase activity, is secreted and reabsorbed by the same epididymal cells under testicular control.</title>
        <authorList>
            <person name="Castella S."/>
            <person name="Benedetti H."/>
            <person name="de Llorens R."/>
            <person name="Dacheux J.-L."/>
            <person name="Dacheux F."/>
        </authorList>
    </citation>
    <scope>FUNCTION</scope>
    <scope>SUBCELLULAR LOCATION</scope>
</reference>
<dbReference type="EMBL" id="AJ430467">
    <property type="protein sequence ID" value="CAD23253.1"/>
    <property type="molecule type" value="mRNA"/>
</dbReference>
<dbReference type="EMBL" id="AJ634916">
    <property type="protein sequence ID" value="CAG25552.1"/>
    <property type="molecule type" value="Genomic_DNA"/>
</dbReference>
<dbReference type="RefSeq" id="NP_001007112.1">
    <property type="nucleotide sequence ID" value="NM_001007111.1"/>
</dbReference>
<dbReference type="RefSeq" id="XP_005656364.1">
    <property type="nucleotide sequence ID" value="XM_005656307.3"/>
</dbReference>
<dbReference type="RefSeq" id="XP_005658175.1">
    <property type="nucleotide sequence ID" value="XM_005658118.2"/>
</dbReference>
<dbReference type="RefSeq" id="XP_013844514.1">
    <property type="nucleotide sequence ID" value="XM_013989060.2"/>
</dbReference>
<dbReference type="RefSeq" id="XP_013844515.1">
    <property type="nucleotide sequence ID" value="XM_013989061.2"/>
</dbReference>
<dbReference type="RefSeq" id="XP_013844516.1">
    <property type="nucleotide sequence ID" value="XM_013989062.1"/>
</dbReference>
<dbReference type="RefSeq" id="XP_013844517.1">
    <property type="nucleotide sequence ID" value="XM_013989063.2"/>
</dbReference>
<dbReference type="RefSeq" id="XP_013846715.1">
    <property type="nucleotide sequence ID" value="XM_013991261.1"/>
</dbReference>
<dbReference type="RefSeq" id="XP_013846716.1">
    <property type="nucleotide sequence ID" value="XM_013991262.1"/>
</dbReference>
<dbReference type="RefSeq" id="XP_013846717.1">
    <property type="nucleotide sequence ID" value="XM_013991263.1"/>
</dbReference>
<dbReference type="RefSeq" id="XP_013846718.1">
    <property type="nucleotide sequence ID" value="XM_013991264.1"/>
</dbReference>
<dbReference type="SMR" id="Q8SPJ0"/>
<dbReference type="FunCoup" id="Q8SPJ0">
    <property type="interactions" value="24"/>
</dbReference>
<dbReference type="STRING" id="9823.ENSSSCP00000002332"/>
<dbReference type="GlyCosmos" id="Q8SPJ0">
    <property type="glycosylation" value="1 site, No reported glycans"/>
</dbReference>
<dbReference type="GlyGen" id="Q8SPJ0">
    <property type="glycosylation" value="1 site"/>
</dbReference>
<dbReference type="iPTMnet" id="Q8SPJ0"/>
<dbReference type="PaxDb" id="9823-ENSSSCP00000002332"/>
<dbReference type="PeptideAtlas" id="Q8SPJ0"/>
<dbReference type="Ensembl" id="ENSSSCT00000002387.4">
    <property type="protein sequence ID" value="ENSSSCP00000002332.1"/>
    <property type="gene ID" value="ENSSSCG00000002134.4"/>
</dbReference>
<dbReference type="Ensembl" id="ENSSSCT00025006430.1">
    <property type="protein sequence ID" value="ENSSSCP00025002668.1"/>
    <property type="gene ID" value="ENSSSCG00025004750.1"/>
</dbReference>
<dbReference type="Ensembl" id="ENSSSCT00035001341.1">
    <property type="protein sequence ID" value="ENSSSCP00035000402.1"/>
    <property type="gene ID" value="ENSSSCG00035001108.1"/>
</dbReference>
<dbReference type="Ensembl" id="ENSSSCT00040023803.1">
    <property type="protein sequence ID" value="ENSSSCP00040010083.1"/>
    <property type="gene ID" value="ENSSSCG00040017633.1"/>
</dbReference>
<dbReference type="Ensembl" id="ENSSSCT00045007229.1">
    <property type="protein sequence ID" value="ENSSSCP00045004966.1"/>
    <property type="gene ID" value="ENSSSCG00045004328.1"/>
</dbReference>
<dbReference type="Ensembl" id="ENSSSCT00050004199.1">
    <property type="protein sequence ID" value="ENSSSCP00050001625.1"/>
    <property type="gene ID" value="ENSSSCG00050003190.1"/>
</dbReference>
<dbReference type="Ensembl" id="ENSSSCT00055031721.1">
    <property type="protein sequence ID" value="ENSSSCP00055025248.1"/>
    <property type="gene ID" value="ENSSSCG00055016101.1"/>
</dbReference>
<dbReference type="Ensembl" id="ENSSSCT00065082526.1">
    <property type="protein sequence ID" value="ENSSSCP00065035954.1"/>
    <property type="gene ID" value="ENSSSCG00065060243.1"/>
</dbReference>
<dbReference type="Ensembl" id="ENSSSCT00070039120.1">
    <property type="protein sequence ID" value="ENSSSCP00070032760.1"/>
    <property type="gene ID" value="ENSSSCG00070019758.1"/>
</dbReference>
<dbReference type="Ensembl" id="ENSSSCT00090049152">
    <property type="protein sequence ID" value="ENSSSCP00090030446"/>
    <property type="gene ID" value="ENSSSCG00090027829"/>
</dbReference>
<dbReference type="Ensembl" id="ENSSSCT00090049169">
    <property type="protein sequence ID" value="ENSSSCP00090030453"/>
    <property type="gene ID" value="ENSSSCG00090027829"/>
</dbReference>
<dbReference type="Ensembl" id="ENSSSCT00105044366">
    <property type="protein sequence ID" value="ENSSSCP00105030900"/>
    <property type="gene ID" value="ENSSSCG00105023359"/>
</dbReference>
<dbReference type="Ensembl" id="ENSSSCT00105044373">
    <property type="protein sequence ID" value="ENSSSCP00105030903"/>
    <property type="gene ID" value="ENSSSCG00105023359"/>
</dbReference>
<dbReference type="Ensembl" id="ENSSSCT00105044384">
    <property type="protein sequence ID" value="ENSSSCP00105030911"/>
    <property type="gene ID" value="ENSSSCG00105023359"/>
</dbReference>
<dbReference type="Ensembl" id="ENSSSCT00110045389">
    <property type="protein sequence ID" value="ENSSSCP00110032041"/>
    <property type="gene ID" value="ENSSSCG00110023474"/>
</dbReference>
<dbReference type="Ensembl" id="ENSSSCT00110045409">
    <property type="protein sequence ID" value="ENSSSCP00110032049"/>
    <property type="gene ID" value="ENSSSCG00110023474"/>
</dbReference>
<dbReference type="Ensembl" id="ENSSSCT00130034649">
    <property type="protein sequence ID" value="ENSSSCP00130023978"/>
    <property type="gene ID" value="ENSSSCG00130017746"/>
</dbReference>
<dbReference type="Ensembl" id="ENSSSCT00130034651">
    <property type="protein sequence ID" value="ENSSSCP00130023979"/>
    <property type="gene ID" value="ENSSSCG00130017746"/>
</dbReference>
<dbReference type="GeneID" id="396701"/>
<dbReference type="KEGG" id="ssc:396701"/>
<dbReference type="CTD" id="338879"/>
<dbReference type="eggNOG" id="ENOG502RPGF">
    <property type="taxonomic scope" value="Eukaryota"/>
</dbReference>
<dbReference type="GeneTree" id="ENSGT00730000111443"/>
<dbReference type="HOGENOM" id="CLU_1280301_0_0_1"/>
<dbReference type="InParanoid" id="Q8SPJ0"/>
<dbReference type="OMA" id="GQVTPHC"/>
<dbReference type="OrthoDB" id="9830114at2759"/>
<dbReference type="TreeFam" id="TF337410"/>
<dbReference type="Proteomes" id="UP000008227">
    <property type="component" value="Chromosome 7"/>
</dbReference>
<dbReference type="Proteomes" id="UP000314985">
    <property type="component" value="Chromosome 7"/>
</dbReference>
<dbReference type="Proteomes" id="UP000694570">
    <property type="component" value="Unplaced"/>
</dbReference>
<dbReference type="Proteomes" id="UP000694571">
    <property type="component" value="Unplaced"/>
</dbReference>
<dbReference type="Proteomes" id="UP000694720">
    <property type="component" value="Unplaced"/>
</dbReference>
<dbReference type="Proteomes" id="UP000694722">
    <property type="component" value="Unplaced"/>
</dbReference>
<dbReference type="Proteomes" id="UP000694723">
    <property type="component" value="Unplaced"/>
</dbReference>
<dbReference type="Proteomes" id="UP000694724">
    <property type="component" value="Unplaced"/>
</dbReference>
<dbReference type="Proteomes" id="UP000694725">
    <property type="component" value="Unplaced"/>
</dbReference>
<dbReference type="Proteomes" id="UP000694726">
    <property type="component" value="Unplaced"/>
</dbReference>
<dbReference type="Proteomes" id="UP000694727">
    <property type="component" value="Unplaced"/>
</dbReference>
<dbReference type="Proteomes" id="UP000694728">
    <property type="component" value="Unplaced"/>
</dbReference>
<dbReference type="Bgee" id="ENSSSCG00000002134">
    <property type="expression patterns" value="Expressed in epididymis and 3 other cell types or tissues"/>
</dbReference>
<dbReference type="GO" id="GO:0005576">
    <property type="term" value="C:extracellular region"/>
    <property type="evidence" value="ECO:0007669"/>
    <property type="project" value="UniProtKB-SubCell"/>
</dbReference>
<dbReference type="GO" id="GO:0003676">
    <property type="term" value="F:nucleic acid binding"/>
    <property type="evidence" value="ECO:0007669"/>
    <property type="project" value="InterPro"/>
</dbReference>
<dbReference type="GO" id="GO:0050830">
    <property type="term" value="P:defense response to Gram-positive bacterium"/>
    <property type="evidence" value="ECO:0000318"/>
    <property type="project" value="GO_Central"/>
</dbReference>
<dbReference type="GO" id="GO:0034113">
    <property type="term" value="P:heterotypic cell-cell adhesion"/>
    <property type="evidence" value="ECO:0000250"/>
    <property type="project" value="UniProtKB"/>
</dbReference>
<dbReference type="GO" id="GO:0022409">
    <property type="term" value="P:positive regulation of cell-cell adhesion"/>
    <property type="evidence" value="ECO:0000250"/>
    <property type="project" value="UniProtKB"/>
</dbReference>
<dbReference type="GO" id="GO:1902093">
    <property type="term" value="P:positive regulation of flagellated sperm motility"/>
    <property type="evidence" value="ECO:0000250"/>
    <property type="project" value="UniProtKB"/>
</dbReference>
<dbReference type="GO" id="GO:0080154">
    <property type="term" value="P:regulation of fertilization"/>
    <property type="evidence" value="ECO:0000250"/>
    <property type="project" value="UniProtKB"/>
</dbReference>
<dbReference type="GO" id="GO:0007338">
    <property type="term" value="P:single fertilization"/>
    <property type="evidence" value="ECO:0007669"/>
    <property type="project" value="UniProtKB-KW"/>
</dbReference>
<dbReference type="CDD" id="cd00163">
    <property type="entry name" value="RNase_A"/>
    <property type="match status" value="1"/>
</dbReference>
<dbReference type="FunFam" id="3.10.130.10:FF:000002">
    <property type="entry name" value="Inactive ribonuclease-like protein 10"/>
    <property type="match status" value="1"/>
</dbReference>
<dbReference type="Gene3D" id="3.10.130.10">
    <property type="entry name" value="Ribonuclease A-like domain"/>
    <property type="match status" value="1"/>
</dbReference>
<dbReference type="InterPro" id="IPR001427">
    <property type="entry name" value="RNaseA"/>
</dbReference>
<dbReference type="InterPro" id="IPR036816">
    <property type="entry name" value="RNaseA-like_dom_sf"/>
</dbReference>
<dbReference type="InterPro" id="IPR023412">
    <property type="entry name" value="RNaseA_domain"/>
</dbReference>
<dbReference type="PANTHER" id="PTHR11437:SF63">
    <property type="entry name" value="INACTIVE RIBONUCLEASE-LIKE PROTEIN 10"/>
    <property type="match status" value="1"/>
</dbReference>
<dbReference type="PANTHER" id="PTHR11437">
    <property type="entry name" value="RIBONUCLEASE"/>
    <property type="match status" value="1"/>
</dbReference>
<dbReference type="Pfam" id="PF00074">
    <property type="entry name" value="RnaseA"/>
    <property type="match status" value="1"/>
</dbReference>
<dbReference type="PRINTS" id="PR00794">
    <property type="entry name" value="RIBONUCLEASE"/>
</dbReference>
<dbReference type="SMART" id="SM00092">
    <property type="entry name" value="RNAse_Pc"/>
    <property type="match status" value="1"/>
</dbReference>
<dbReference type="SUPFAM" id="SSF54076">
    <property type="entry name" value="RNase A-like"/>
    <property type="match status" value="1"/>
</dbReference>
<evidence type="ECO:0000250" key="1"/>
<evidence type="ECO:0000255" key="2"/>
<evidence type="ECO:0000269" key="3">
    <source>
    </source>
</evidence>
<evidence type="ECO:0000269" key="4">
    <source>
    </source>
</evidence>
<evidence type="ECO:0000305" key="5"/>
<evidence type="ECO:0000305" key="6">
    <source>
    </source>
</evidence>
<proteinExistence type="evidence at protein level"/>
<protein>
    <recommendedName>
        <fullName>Inactive ribonuclease-like protein 10</fullName>
    </recommendedName>
    <alternativeName>
        <fullName>Protein Train A</fullName>
    </alternativeName>
</protein>
<name>RNS10_PIG</name>
<organism>
    <name type="scientific">Sus scrofa</name>
    <name type="common">Pig</name>
    <dbReference type="NCBI Taxonomy" id="9823"/>
    <lineage>
        <taxon>Eukaryota</taxon>
        <taxon>Metazoa</taxon>
        <taxon>Chordata</taxon>
        <taxon>Craniata</taxon>
        <taxon>Vertebrata</taxon>
        <taxon>Euteleostomi</taxon>
        <taxon>Mammalia</taxon>
        <taxon>Eutheria</taxon>
        <taxon>Laurasiatheria</taxon>
        <taxon>Artiodactyla</taxon>
        <taxon>Suina</taxon>
        <taxon>Suidae</taxon>
        <taxon>Sus</taxon>
    </lineage>
</organism>
<accession>Q8SPJ0</accession>
<feature type="signal peptide" evidence="2">
    <location>
        <begin position="1"/>
        <end position="24"/>
    </location>
</feature>
<feature type="chain" id="PRO_0000045965" description="Inactive ribonuclease-like protein 10">
    <location>
        <begin position="25"/>
        <end position="213"/>
    </location>
</feature>
<feature type="glycosylation site" description="N-linked (GlcNAc...) asparagine" evidence="6">
    <location>
        <position position="128"/>
    </location>
</feature>
<sequence>MKLTLVQFFFMMLLLLLGLGVGLGLGLQMAAAVLEESDQLLSEFQSSDSQDKTQATKKGAGTRTMETLLLSDNVVMQPEETILSEDEVGGNKMLRAQAFSQSYPNYLRSDLMDRECNTLMAKKMKPYNHTCISQYIFIHEEPDEIKAVCKSPPVACELKGGKCHKSARPFDLTFCKLSKPGQVTPHCNYVTFLLEKHILISCNDMKVQVMSGS</sequence>
<keyword id="KW-0130">Cell adhesion</keyword>
<keyword id="KW-0903">Direct protein sequencing</keyword>
<keyword id="KW-0278">Fertilization</keyword>
<keyword id="KW-0325">Glycoprotein</keyword>
<keyword id="KW-1185">Reference proteome</keyword>
<keyword id="KW-0964">Secreted</keyword>
<keyword id="KW-0732">Signal</keyword>